<feature type="chain" id="PRO_0000335642" description="Acetylglutamate kinase">
    <location>
        <begin position="1"/>
        <end position="244"/>
    </location>
</feature>
<feature type="binding site" evidence="1">
    <location>
        <begin position="40"/>
        <end position="41"/>
    </location>
    <ligand>
        <name>substrate</name>
    </ligand>
</feature>
<feature type="binding site" evidence="1">
    <location>
        <position position="62"/>
    </location>
    <ligand>
        <name>substrate</name>
    </ligand>
</feature>
<feature type="binding site" evidence="1">
    <location>
        <position position="155"/>
    </location>
    <ligand>
        <name>substrate</name>
    </ligand>
</feature>
<feature type="site" description="Transition state stabilizer" evidence="1">
    <location>
        <position position="7"/>
    </location>
</feature>
<feature type="site" description="Transition state stabilizer" evidence="1">
    <location>
        <position position="214"/>
    </location>
</feature>
<sequence length="244" mass="26523">MKKIVIKIGGNAATQLTPAFFDTIKFWQKQHYKIAIVHGGGDTISALMSQLNEPVQKINGIRFTTQNGINITKMALLGQVQPALLESCRVNGLSVIGLNAASDQLLTGHTIDQDTFGYVGNIHQVNTKLIHNLWEKNLIPIIAPMAITNSGQWLNVNADHAATALAKYLKADELYLLTDVSGVKIKGNVLQNLTSKTMEELQKKQMITGGMIPKVNSALFAARHGVRAVHITNTVTHPGTIVTI</sequence>
<comment type="function">
    <text evidence="1">Catalyzes the ATP-dependent phosphorylation of N-acetyl-L-glutamate.</text>
</comment>
<comment type="catalytic activity">
    <reaction evidence="1">
        <text>N-acetyl-L-glutamate + ATP = N-acetyl-L-glutamyl 5-phosphate + ADP</text>
        <dbReference type="Rhea" id="RHEA:14629"/>
        <dbReference type="ChEBI" id="CHEBI:30616"/>
        <dbReference type="ChEBI" id="CHEBI:44337"/>
        <dbReference type="ChEBI" id="CHEBI:57936"/>
        <dbReference type="ChEBI" id="CHEBI:456216"/>
        <dbReference type="EC" id="2.7.2.8"/>
    </reaction>
</comment>
<comment type="pathway">
    <text evidence="1">Amino-acid biosynthesis; L-arginine biosynthesis; N(2)-acetyl-L-ornithine from L-glutamate: step 2/4.</text>
</comment>
<comment type="subcellular location">
    <subcellularLocation>
        <location evidence="1">Cytoplasm</location>
    </subcellularLocation>
</comment>
<comment type="similarity">
    <text evidence="1">Belongs to the acetylglutamate kinase family. ArgB subfamily.</text>
</comment>
<dbReference type="EC" id="2.7.2.8" evidence="1"/>
<dbReference type="EMBL" id="CP000414">
    <property type="protein sequence ID" value="ABJ61210.1"/>
    <property type="molecule type" value="Genomic_DNA"/>
</dbReference>
<dbReference type="RefSeq" id="WP_011679048.1">
    <property type="nucleotide sequence ID" value="NC_008531.1"/>
</dbReference>
<dbReference type="SMR" id="Q040B2"/>
<dbReference type="EnsemblBacteria" id="ABJ61210">
    <property type="protein sequence ID" value="ABJ61210"/>
    <property type="gene ID" value="LEUM_0058"/>
</dbReference>
<dbReference type="GeneID" id="29576497"/>
<dbReference type="KEGG" id="lme:LEUM_0058"/>
<dbReference type="eggNOG" id="COG0548">
    <property type="taxonomic scope" value="Bacteria"/>
</dbReference>
<dbReference type="HOGENOM" id="CLU_053680_1_0_9"/>
<dbReference type="UniPathway" id="UPA00068">
    <property type="reaction ID" value="UER00107"/>
</dbReference>
<dbReference type="Proteomes" id="UP000000362">
    <property type="component" value="Chromosome"/>
</dbReference>
<dbReference type="GO" id="GO:0005737">
    <property type="term" value="C:cytoplasm"/>
    <property type="evidence" value="ECO:0007669"/>
    <property type="project" value="UniProtKB-SubCell"/>
</dbReference>
<dbReference type="GO" id="GO:0003991">
    <property type="term" value="F:acetylglutamate kinase activity"/>
    <property type="evidence" value="ECO:0007669"/>
    <property type="project" value="UniProtKB-UniRule"/>
</dbReference>
<dbReference type="GO" id="GO:0005524">
    <property type="term" value="F:ATP binding"/>
    <property type="evidence" value="ECO:0007669"/>
    <property type="project" value="UniProtKB-UniRule"/>
</dbReference>
<dbReference type="GO" id="GO:0042450">
    <property type="term" value="P:arginine biosynthetic process via ornithine"/>
    <property type="evidence" value="ECO:0007669"/>
    <property type="project" value="UniProtKB-UniRule"/>
</dbReference>
<dbReference type="GO" id="GO:0006526">
    <property type="term" value="P:L-arginine biosynthetic process"/>
    <property type="evidence" value="ECO:0007669"/>
    <property type="project" value="UniProtKB-UniPathway"/>
</dbReference>
<dbReference type="CDD" id="cd04238">
    <property type="entry name" value="AAK_NAGK-like"/>
    <property type="match status" value="1"/>
</dbReference>
<dbReference type="Gene3D" id="3.40.1160.10">
    <property type="entry name" value="Acetylglutamate kinase-like"/>
    <property type="match status" value="1"/>
</dbReference>
<dbReference type="HAMAP" id="MF_00082">
    <property type="entry name" value="ArgB"/>
    <property type="match status" value="1"/>
</dbReference>
<dbReference type="InterPro" id="IPR036393">
    <property type="entry name" value="AceGlu_kinase-like_sf"/>
</dbReference>
<dbReference type="InterPro" id="IPR004662">
    <property type="entry name" value="AcgluKinase_fam"/>
</dbReference>
<dbReference type="InterPro" id="IPR037528">
    <property type="entry name" value="ArgB"/>
</dbReference>
<dbReference type="InterPro" id="IPR001048">
    <property type="entry name" value="Asp/Glu/Uridylate_kinase"/>
</dbReference>
<dbReference type="NCBIfam" id="TIGR00761">
    <property type="entry name" value="argB"/>
    <property type="match status" value="1"/>
</dbReference>
<dbReference type="PANTHER" id="PTHR23342">
    <property type="entry name" value="N-ACETYLGLUTAMATE SYNTHASE"/>
    <property type="match status" value="1"/>
</dbReference>
<dbReference type="PANTHER" id="PTHR23342:SF0">
    <property type="entry name" value="N-ACETYLGLUTAMATE SYNTHASE, MITOCHONDRIAL"/>
    <property type="match status" value="1"/>
</dbReference>
<dbReference type="Pfam" id="PF00696">
    <property type="entry name" value="AA_kinase"/>
    <property type="match status" value="1"/>
</dbReference>
<dbReference type="PIRSF" id="PIRSF000728">
    <property type="entry name" value="NAGK"/>
    <property type="match status" value="1"/>
</dbReference>
<dbReference type="SUPFAM" id="SSF53633">
    <property type="entry name" value="Carbamate kinase-like"/>
    <property type="match status" value="1"/>
</dbReference>
<proteinExistence type="inferred from homology"/>
<gene>
    <name evidence="1" type="primary">argB</name>
    <name type="ordered locus">LEUM_0058</name>
</gene>
<organism>
    <name type="scientific">Leuconostoc mesenteroides subsp. mesenteroides (strain ATCC 8293 / DSM 20343 / BCRC 11652 / CCM 1803 / JCM 6124 / NCDO 523 / NBRC 100496 / NCIMB 8023 / NCTC 12954 / NRRL B-1118 / 37Y)</name>
    <dbReference type="NCBI Taxonomy" id="203120"/>
    <lineage>
        <taxon>Bacteria</taxon>
        <taxon>Bacillati</taxon>
        <taxon>Bacillota</taxon>
        <taxon>Bacilli</taxon>
        <taxon>Lactobacillales</taxon>
        <taxon>Lactobacillaceae</taxon>
        <taxon>Leuconostoc</taxon>
    </lineage>
</organism>
<reference key="1">
    <citation type="journal article" date="2006" name="Proc. Natl. Acad. Sci. U.S.A.">
        <title>Comparative genomics of the lactic acid bacteria.</title>
        <authorList>
            <person name="Makarova K.S."/>
            <person name="Slesarev A."/>
            <person name="Wolf Y.I."/>
            <person name="Sorokin A."/>
            <person name="Mirkin B."/>
            <person name="Koonin E.V."/>
            <person name="Pavlov A."/>
            <person name="Pavlova N."/>
            <person name="Karamychev V."/>
            <person name="Polouchine N."/>
            <person name="Shakhova V."/>
            <person name="Grigoriev I."/>
            <person name="Lou Y."/>
            <person name="Rohksar D."/>
            <person name="Lucas S."/>
            <person name="Huang K."/>
            <person name="Goodstein D.M."/>
            <person name="Hawkins T."/>
            <person name="Plengvidhya V."/>
            <person name="Welker D."/>
            <person name="Hughes J."/>
            <person name="Goh Y."/>
            <person name="Benson A."/>
            <person name="Baldwin K."/>
            <person name="Lee J.-H."/>
            <person name="Diaz-Muniz I."/>
            <person name="Dosti B."/>
            <person name="Smeianov V."/>
            <person name="Wechter W."/>
            <person name="Barabote R."/>
            <person name="Lorca G."/>
            <person name="Altermann E."/>
            <person name="Barrangou R."/>
            <person name="Ganesan B."/>
            <person name="Xie Y."/>
            <person name="Rawsthorne H."/>
            <person name="Tamir D."/>
            <person name="Parker C."/>
            <person name="Breidt F."/>
            <person name="Broadbent J.R."/>
            <person name="Hutkins R."/>
            <person name="O'Sullivan D."/>
            <person name="Steele J."/>
            <person name="Unlu G."/>
            <person name="Saier M.H. Jr."/>
            <person name="Klaenhammer T."/>
            <person name="Richardson P."/>
            <person name="Kozyavkin S."/>
            <person name="Weimer B.C."/>
            <person name="Mills D.A."/>
        </authorList>
    </citation>
    <scope>NUCLEOTIDE SEQUENCE [LARGE SCALE GENOMIC DNA]</scope>
    <source>
        <strain>ATCC 8293 / DSM 20343 / BCRC 11652 / CCM 1803 / JCM 6124 / NCDO 523 / NBRC 100496 / NCIMB 8023 / NCTC 12954 / NRRL B-1118 / 37Y</strain>
    </source>
</reference>
<name>ARGB_LEUMM</name>
<keyword id="KW-0028">Amino-acid biosynthesis</keyword>
<keyword id="KW-0055">Arginine biosynthesis</keyword>
<keyword id="KW-0067">ATP-binding</keyword>
<keyword id="KW-0963">Cytoplasm</keyword>
<keyword id="KW-0418">Kinase</keyword>
<keyword id="KW-0547">Nucleotide-binding</keyword>
<keyword id="KW-1185">Reference proteome</keyword>
<keyword id="KW-0808">Transferase</keyword>
<protein>
    <recommendedName>
        <fullName evidence="1">Acetylglutamate kinase</fullName>
        <ecNumber evidence="1">2.7.2.8</ecNumber>
    </recommendedName>
    <alternativeName>
        <fullName evidence="1">N-acetyl-L-glutamate 5-phosphotransferase</fullName>
    </alternativeName>
    <alternativeName>
        <fullName evidence="1">NAG kinase</fullName>
        <shortName evidence="1">NAGK</shortName>
    </alternativeName>
</protein>
<accession>Q040B2</accession>
<evidence type="ECO:0000255" key="1">
    <source>
        <dbReference type="HAMAP-Rule" id="MF_00082"/>
    </source>
</evidence>